<keyword id="KW-0560">Oxidoreductase</keyword>
<sequence length="142" mass="16277">MLKKDKSELTDIEYIVTQENGTEPPFMNEYWNHFAKGIYVDKISGKPLFTSEEKFHSECGWPSFSKALDDDEIIELVDKSFGMLRTEVRSEESNSHLGHVFNDGPKESGGLRYCINSAAIQFIPYEKLEELGYGDLISHFDK</sequence>
<dbReference type="EC" id="1.8.4.12" evidence="1"/>
<dbReference type="EMBL" id="CP000730">
    <property type="protein sequence ID" value="ABX29370.1"/>
    <property type="molecule type" value="Genomic_DNA"/>
</dbReference>
<dbReference type="RefSeq" id="WP_000913315.1">
    <property type="nucleotide sequence ID" value="NC_010079.1"/>
</dbReference>
<dbReference type="SMR" id="A8Z402"/>
<dbReference type="KEGG" id="sax:USA300HOU_1360"/>
<dbReference type="HOGENOM" id="CLU_031040_8_5_9"/>
<dbReference type="GO" id="GO:0005737">
    <property type="term" value="C:cytoplasm"/>
    <property type="evidence" value="ECO:0007669"/>
    <property type="project" value="TreeGrafter"/>
</dbReference>
<dbReference type="GO" id="GO:0033743">
    <property type="term" value="F:peptide-methionine (R)-S-oxide reductase activity"/>
    <property type="evidence" value="ECO:0007669"/>
    <property type="project" value="UniProtKB-UniRule"/>
</dbReference>
<dbReference type="GO" id="GO:0030091">
    <property type="term" value="P:protein repair"/>
    <property type="evidence" value="ECO:0007669"/>
    <property type="project" value="InterPro"/>
</dbReference>
<dbReference type="GO" id="GO:0006979">
    <property type="term" value="P:response to oxidative stress"/>
    <property type="evidence" value="ECO:0007669"/>
    <property type="project" value="InterPro"/>
</dbReference>
<dbReference type="FunFam" id="2.170.150.20:FF:000003">
    <property type="entry name" value="Peptide methionine sulfoxide reductase MsrB"/>
    <property type="match status" value="1"/>
</dbReference>
<dbReference type="Gene3D" id="2.170.150.20">
    <property type="entry name" value="Peptide methionine sulfoxide reductase"/>
    <property type="match status" value="1"/>
</dbReference>
<dbReference type="HAMAP" id="MF_01400">
    <property type="entry name" value="MsrB"/>
    <property type="match status" value="1"/>
</dbReference>
<dbReference type="InterPro" id="IPR028427">
    <property type="entry name" value="Met_Sox_Rdtase_MsrB"/>
</dbReference>
<dbReference type="InterPro" id="IPR002579">
    <property type="entry name" value="Met_Sox_Rdtase_MsrB_dom"/>
</dbReference>
<dbReference type="InterPro" id="IPR011057">
    <property type="entry name" value="Mss4-like_sf"/>
</dbReference>
<dbReference type="NCBIfam" id="TIGR00357">
    <property type="entry name" value="peptide-methionine (R)-S-oxide reductase MsrB"/>
    <property type="match status" value="1"/>
</dbReference>
<dbReference type="PANTHER" id="PTHR10173">
    <property type="entry name" value="METHIONINE SULFOXIDE REDUCTASE"/>
    <property type="match status" value="1"/>
</dbReference>
<dbReference type="PANTHER" id="PTHR10173:SF59">
    <property type="entry name" value="PEPTIDE METHIONINE SULFOXIDE REDUCTASE MSRA_MSRB"/>
    <property type="match status" value="1"/>
</dbReference>
<dbReference type="Pfam" id="PF01641">
    <property type="entry name" value="SelR"/>
    <property type="match status" value="1"/>
</dbReference>
<dbReference type="SUPFAM" id="SSF51316">
    <property type="entry name" value="Mss4-like"/>
    <property type="match status" value="1"/>
</dbReference>
<dbReference type="PROSITE" id="PS51790">
    <property type="entry name" value="MSRB"/>
    <property type="match status" value="1"/>
</dbReference>
<name>MSRB_STAAT</name>
<protein>
    <recommendedName>
        <fullName evidence="1">Peptide methionine sulfoxide reductase MsrB</fullName>
        <ecNumber evidence="1">1.8.4.12</ecNumber>
    </recommendedName>
    <alternativeName>
        <fullName evidence="1">Peptide-methionine (R)-S-oxide reductase</fullName>
    </alternativeName>
</protein>
<evidence type="ECO:0000255" key="1">
    <source>
        <dbReference type="HAMAP-Rule" id="MF_01400"/>
    </source>
</evidence>
<evidence type="ECO:0000255" key="2">
    <source>
        <dbReference type="PROSITE-ProRule" id="PRU01126"/>
    </source>
</evidence>
<accession>A8Z402</accession>
<reference key="1">
    <citation type="journal article" date="2007" name="BMC Microbiol.">
        <title>Subtle genetic changes enhance virulence of methicillin resistant and sensitive Staphylococcus aureus.</title>
        <authorList>
            <person name="Highlander S.K."/>
            <person name="Hulten K.G."/>
            <person name="Qin X."/>
            <person name="Jiang H."/>
            <person name="Yerrapragada S."/>
            <person name="Mason E.O. Jr."/>
            <person name="Shang Y."/>
            <person name="Williams T.M."/>
            <person name="Fortunov R.M."/>
            <person name="Liu Y."/>
            <person name="Igboeli O."/>
            <person name="Petrosino J."/>
            <person name="Tirumalai M."/>
            <person name="Uzman A."/>
            <person name="Fox G.E."/>
            <person name="Cardenas A.M."/>
            <person name="Muzny D.M."/>
            <person name="Hemphill L."/>
            <person name="Ding Y."/>
            <person name="Dugan S."/>
            <person name="Blyth P.R."/>
            <person name="Buhay C.J."/>
            <person name="Dinh H.H."/>
            <person name="Hawes A.C."/>
            <person name="Holder M."/>
            <person name="Kovar C.L."/>
            <person name="Lee S.L."/>
            <person name="Liu W."/>
            <person name="Nazareth L.V."/>
            <person name="Wang Q."/>
            <person name="Zhou J."/>
            <person name="Kaplan S.L."/>
            <person name="Weinstock G.M."/>
        </authorList>
    </citation>
    <scope>NUCLEOTIDE SEQUENCE [LARGE SCALE GENOMIC DNA]</scope>
    <source>
        <strain>USA300 / TCH1516</strain>
    </source>
</reference>
<organism>
    <name type="scientific">Staphylococcus aureus (strain USA300 / TCH1516)</name>
    <dbReference type="NCBI Taxonomy" id="451516"/>
    <lineage>
        <taxon>Bacteria</taxon>
        <taxon>Bacillati</taxon>
        <taxon>Bacillota</taxon>
        <taxon>Bacilli</taxon>
        <taxon>Bacillales</taxon>
        <taxon>Staphylococcaceae</taxon>
        <taxon>Staphylococcus</taxon>
    </lineage>
</organism>
<feature type="chain" id="PRO_1000087344" description="Peptide methionine sulfoxide reductase MsrB">
    <location>
        <begin position="1"/>
        <end position="142"/>
    </location>
</feature>
<feature type="domain" description="MsrB" evidence="2">
    <location>
        <begin position="2"/>
        <end position="125"/>
    </location>
</feature>
<feature type="active site" description="Nucleophile" evidence="2">
    <location>
        <position position="114"/>
    </location>
</feature>
<gene>
    <name evidence="1" type="primary">msrB</name>
    <name type="ordered locus">USA300HOU_1360</name>
</gene>
<comment type="catalytic activity">
    <reaction evidence="1">
        <text>L-methionyl-[protein] + [thioredoxin]-disulfide + H2O = L-methionyl-(R)-S-oxide-[protein] + [thioredoxin]-dithiol</text>
        <dbReference type="Rhea" id="RHEA:24164"/>
        <dbReference type="Rhea" id="RHEA-COMP:10698"/>
        <dbReference type="Rhea" id="RHEA-COMP:10700"/>
        <dbReference type="Rhea" id="RHEA-COMP:12313"/>
        <dbReference type="Rhea" id="RHEA-COMP:12314"/>
        <dbReference type="ChEBI" id="CHEBI:15377"/>
        <dbReference type="ChEBI" id="CHEBI:16044"/>
        <dbReference type="ChEBI" id="CHEBI:29950"/>
        <dbReference type="ChEBI" id="CHEBI:45764"/>
        <dbReference type="ChEBI" id="CHEBI:50058"/>
        <dbReference type="EC" id="1.8.4.12"/>
    </reaction>
</comment>
<comment type="similarity">
    <text evidence="1">Belongs to the MsrB Met sulfoxide reductase family.</text>
</comment>
<proteinExistence type="inferred from homology"/>